<gene>
    <name evidence="1" type="primary">birA</name>
    <name type="ordered locus">HI_0220.1</name>
</gene>
<dbReference type="EC" id="6.3.4.15" evidence="1"/>
<dbReference type="EMBL" id="L42023">
    <property type="protein sequence ID" value="AAC21889.1"/>
    <property type="molecule type" value="Genomic_DNA"/>
</dbReference>
<dbReference type="RefSeq" id="NP_438391.1">
    <property type="nucleotide sequence ID" value="NC_000907.1"/>
</dbReference>
<dbReference type="PDB" id="9J8E">
    <property type="method" value="X-ray"/>
    <property type="resolution" value="2.65 A"/>
    <property type="chains" value="A/B=1-302"/>
</dbReference>
<dbReference type="PDB" id="9J8F">
    <property type="method" value="X-ray"/>
    <property type="resolution" value="2.65 A"/>
    <property type="chains" value="A/B=1-302"/>
</dbReference>
<dbReference type="PDBsum" id="9J8E"/>
<dbReference type="PDBsum" id="9J8F"/>
<dbReference type="SMR" id="P46363"/>
<dbReference type="STRING" id="71421.HI_0220.1"/>
<dbReference type="EnsemblBacteria" id="AAC21889">
    <property type="protein sequence ID" value="AAC21889"/>
    <property type="gene ID" value="HI_0220.1"/>
</dbReference>
<dbReference type="KEGG" id="hin:HI_0220.1"/>
<dbReference type="PATRIC" id="fig|71421.8.peg.232"/>
<dbReference type="eggNOG" id="COG0340">
    <property type="taxonomic scope" value="Bacteria"/>
</dbReference>
<dbReference type="eggNOG" id="COG1654">
    <property type="taxonomic scope" value="Bacteria"/>
</dbReference>
<dbReference type="HOGENOM" id="CLU_051096_4_0_6"/>
<dbReference type="OrthoDB" id="9807064at2"/>
<dbReference type="PhylomeDB" id="P46363"/>
<dbReference type="BioCyc" id="HINF71421:G1GJ1-236-MONOMER"/>
<dbReference type="Proteomes" id="UP000000579">
    <property type="component" value="Chromosome"/>
</dbReference>
<dbReference type="GO" id="GO:0005737">
    <property type="term" value="C:cytoplasm"/>
    <property type="evidence" value="ECO:0000318"/>
    <property type="project" value="GO_Central"/>
</dbReference>
<dbReference type="GO" id="GO:0005524">
    <property type="term" value="F:ATP binding"/>
    <property type="evidence" value="ECO:0007669"/>
    <property type="project" value="UniProtKB-UniRule"/>
</dbReference>
<dbReference type="GO" id="GO:0004077">
    <property type="term" value="F:biotin--[biotin carboxyl-carrier protein] ligase activity"/>
    <property type="evidence" value="ECO:0000318"/>
    <property type="project" value="GO_Central"/>
</dbReference>
<dbReference type="GO" id="GO:0003677">
    <property type="term" value="F:DNA binding"/>
    <property type="evidence" value="ECO:0007669"/>
    <property type="project" value="UniProtKB-UniRule"/>
</dbReference>
<dbReference type="GO" id="GO:0036211">
    <property type="term" value="P:protein modification process"/>
    <property type="evidence" value="ECO:0007669"/>
    <property type="project" value="InterPro"/>
</dbReference>
<dbReference type="GO" id="GO:0006355">
    <property type="term" value="P:regulation of DNA-templated transcription"/>
    <property type="evidence" value="ECO:0007669"/>
    <property type="project" value="UniProtKB-UniRule"/>
</dbReference>
<dbReference type="CDD" id="cd16442">
    <property type="entry name" value="BPL"/>
    <property type="match status" value="1"/>
</dbReference>
<dbReference type="Gene3D" id="2.30.30.100">
    <property type="match status" value="1"/>
</dbReference>
<dbReference type="Gene3D" id="3.30.930.10">
    <property type="entry name" value="Bira Bifunctional Protein, Domain 2"/>
    <property type="match status" value="1"/>
</dbReference>
<dbReference type="HAMAP" id="MF_00978">
    <property type="entry name" value="Bifunct_BirA"/>
    <property type="match status" value="1"/>
</dbReference>
<dbReference type="InterPro" id="IPR045864">
    <property type="entry name" value="aa-tRNA-synth_II/BPL/LPL"/>
</dbReference>
<dbReference type="InterPro" id="IPR030855">
    <property type="entry name" value="Bifunct_BirA"/>
</dbReference>
<dbReference type="InterPro" id="IPR004408">
    <property type="entry name" value="Biotin_CoA_COase_ligase"/>
</dbReference>
<dbReference type="InterPro" id="IPR004409">
    <property type="entry name" value="Biotin_operon_repress_HTH"/>
</dbReference>
<dbReference type="InterPro" id="IPR003142">
    <property type="entry name" value="BPL_C"/>
</dbReference>
<dbReference type="InterPro" id="IPR004143">
    <property type="entry name" value="BPL_LPL_catalytic"/>
</dbReference>
<dbReference type="InterPro" id="IPR008988">
    <property type="entry name" value="Transcriptional_repressor_C"/>
</dbReference>
<dbReference type="NCBIfam" id="TIGR00121">
    <property type="entry name" value="birA_ligase"/>
    <property type="match status" value="1"/>
</dbReference>
<dbReference type="NCBIfam" id="TIGR00122">
    <property type="entry name" value="birA_repr_reg"/>
    <property type="match status" value="1"/>
</dbReference>
<dbReference type="NCBIfam" id="NF008847">
    <property type="entry name" value="PRK11886.1-2"/>
    <property type="match status" value="1"/>
</dbReference>
<dbReference type="PANTHER" id="PTHR12835">
    <property type="entry name" value="BIOTIN PROTEIN LIGASE"/>
    <property type="match status" value="1"/>
</dbReference>
<dbReference type="PANTHER" id="PTHR12835:SF5">
    <property type="entry name" value="BIOTIN--PROTEIN LIGASE"/>
    <property type="match status" value="1"/>
</dbReference>
<dbReference type="Pfam" id="PF02237">
    <property type="entry name" value="BPL_C"/>
    <property type="match status" value="1"/>
</dbReference>
<dbReference type="Pfam" id="PF03099">
    <property type="entry name" value="BPL_LplA_LipB"/>
    <property type="match status" value="1"/>
</dbReference>
<dbReference type="SUPFAM" id="SSF50037">
    <property type="entry name" value="C-terminal domain of transcriptional repressors"/>
    <property type="match status" value="1"/>
</dbReference>
<dbReference type="SUPFAM" id="SSF55681">
    <property type="entry name" value="Class II aaRS and biotin synthetases"/>
    <property type="match status" value="1"/>
</dbReference>
<dbReference type="PROSITE" id="PS51733">
    <property type="entry name" value="BPL_LPL_CATALYTIC"/>
    <property type="match status" value="1"/>
</dbReference>
<feature type="chain" id="PRO_0000064933" description="Bifunctional ligase/repressor BirA">
    <location>
        <begin position="1"/>
        <end position="302"/>
    </location>
</feature>
<feature type="domain" description="BPL/LPL catalytic" evidence="2">
    <location>
        <begin position="62"/>
        <end position="236"/>
    </location>
</feature>
<feature type="DNA-binding region" description="H-T-H motif" evidence="1">
    <location>
        <begin position="14"/>
        <end position="33"/>
    </location>
</feature>
<feature type="binding site" evidence="1">
    <location>
        <begin position="80"/>
        <end position="82"/>
    </location>
    <ligand>
        <name>biotin</name>
        <dbReference type="ChEBI" id="CHEBI:57586"/>
    </ligand>
</feature>
<feature type="binding site" evidence="1">
    <location>
        <position position="103"/>
    </location>
    <ligand>
        <name>biotin</name>
        <dbReference type="ChEBI" id="CHEBI:57586"/>
    </ligand>
</feature>
<feature type="binding site" evidence="1">
    <location>
        <begin position="107"/>
        <end position="109"/>
    </location>
    <ligand>
        <name>biotin</name>
        <dbReference type="ChEBI" id="CHEBI:57586"/>
    </ligand>
</feature>
<feature type="binding site" evidence="1">
    <location>
        <position position="167"/>
    </location>
    <ligand>
        <name>biotin</name>
        <dbReference type="ChEBI" id="CHEBI:57586"/>
    </ligand>
</feature>
<sequence length="302" mass="34342">MMNFTLLTYLADCQPKVRSELEKFSKNLEEDIQQLREIGLDILVDGQDYRLVPMLPLLNPQQISTALFPYSIHYQPIISSTNEWILQNILSLKKGDLCVAEYQTAGRGRRGRQWLSPFAGQIMFSFYWAFDPKKSIEGLSLVIGLAIAEVLNVQVKWPNDILFDERKLGGILVEIANHKNGMLNLVIGIGINVSLSKQTEISQPYAEVCEIDPDVERQTLLPKLIQHLYTRLNIFEQNGIDEEFQQAWQSYNAFSNSEINVLTEQGVISGIEQGIDERGYLKVLCGNKIQMFNGGEVSLRKK</sequence>
<evidence type="ECO:0000255" key="1">
    <source>
        <dbReference type="HAMAP-Rule" id="MF_00978"/>
    </source>
</evidence>
<evidence type="ECO:0000255" key="2">
    <source>
        <dbReference type="PROSITE-ProRule" id="PRU01067"/>
    </source>
</evidence>
<reference key="1">
    <citation type="journal article" date="1995" name="Science">
        <title>Whole-genome random sequencing and assembly of Haemophilus influenzae Rd.</title>
        <authorList>
            <person name="Fleischmann R.D."/>
            <person name="Adams M.D."/>
            <person name="White O."/>
            <person name="Clayton R.A."/>
            <person name="Kirkness E.F."/>
            <person name="Kerlavage A.R."/>
            <person name="Bult C.J."/>
            <person name="Tomb J.-F."/>
            <person name="Dougherty B.A."/>
            <person name="Merrick J.M."/>
            <person name="McKenney K."/>
            <person name="Sutton G.G."/>
            <person name="FitzHugh W."/>
            <person name="Fields C.A."/>
            <person name="Gocayne J.D."/>
            <person name="Scott J.D."/>
            <person name="Shirley R."/>
            <person name="Liu L.-I."/>
            <person name="Glodek A."/>
            <person name="Kelley J.M."/>
            <person name="Weidman J.F."/>
            <person name="Phillips C.A."/>
            <person name="Spriggs T."/>
            <person name="Hedblom E."/>
            <person name="Cotton M.D."/>
            <person name="Utterback T.R."/>
            <person name="Hanna M.C."/>
            <person name="Nguyen D.T."/>
            <person name="Saudek D.M."/>
            <person name="Brandon R.C."/>
            <person name="Fine L.D."/>
            <person name="Fritchman J.L."/>
            <person name="Fuhrmann J.L."/>
            <person name="Geoghagen N.S.M."/>
            <person name="Gnehm C.L."/>
            <person name="McDonald L.A."/>
            <person name="Small K.V."/>
            <person name="Fraser C.M."/>
            <person name="Smith H.O."/>
            <person name="Venter J.C."/>
        </authorList>
    </citation>
    <scope>NUCLEOTIDE SEQUENCE [LARGE SCALE GENOMIC DNA]</scope>
    <source>
        <strain>ATCC 51907 / DSM 11121 / KW20 / Rd</strain>
    </source>
</reference>
<reference key="2">
    <citation type="submission" date="1995-09" db="UniProtKB">
        <authorList>
            <person name="Koonin E.V."/>
            <person name="Rudd K.E."/>
        </authorList>
    </citation>
    <scope>IDENTIFICATION</scope>
</reference>
<protein>
    <recommendedName>
        <fullName evidence="1">Bifunctional ligase/repressor BirA</fullName>
    </recommendedName>
    <alternativeName>
        <fullName evidence="1">Biotin operon repressor</fullName>
    </alternativeName>
    <alternativeName>
        <fullName evidence="1">Biotin--[acetyl-CoA-carboxylase] ligase</fullName>
        <ecNumber evidence="1">6.3.4.15</ecNumber>
    </alternativeName>
    <alternativeName>
        <fullName evidence="1">Biotin--protein ligase</fullName>
    </alternativeName>
    <alternativeName>
        <fullName evidence="1">Biotin-[acetyl-CoA carboxylase] synthetase</fullName>
    </alternativeName>
</protein>
<organism>
    <name type="scientific">Haemophilus influenzae (strain ATCC 51907 / DSM 11121 / KW20 / Rd)</name>
    <dbReference type="NCBI Taxonomy" id="71421"/>
    <lineage>
        <taxon>Bacteria</taxon>
        <taxon>Pseudomonadati</taxon>
        <taxon>Pseudomonadota</taxon>
        <taxon>Gammaproteobacteria</taxon>
        <taxon>Pasteurellales</taxon>
        <taxon>Pasteurellaceae</taxon>
        <taxon>Haemophilus</taxon>
    </lineage>
</organism>
<name>BIRA_HAEIN</name>
<proteinExistence type="evidence at protein level"/>
<keyword id="KW-0002">3D-structure</keyword>
<keyword id="KW-0067">ATP-binding</keyword>
<keyword id="KW-0092">Biotin</keyword>
<keyword id="KW-0238">DNA-binding</keyword>
<keyword id="KW-0436">Ligase</keyword>
<keyword id="KW-0547">Nucleotide-binding</keyword>
<keyword id="KW-1185">Reference proteome</keyword>
<keyword id="KW-0678">Repressor</keyword>
<keyword id="KW-0804">Transcription</keyword>
<keyword id="KW-0805">Transcription regulation</keyword>
<accession>P46363</accession>
<comment type="function">
    <text evidence="1">Acts both as a biotin--[acetyl-CoA-carboxylase] ligase and a biotin-operon repressor. In the presence of ATP, BirA activates biotin to form the BirA-biotinyl-5'-adenylate (BirA-bio-5'-AMP or holoBirA) complex. HoloBirA can either transfer the biotinyl moiety to the biotin carboxyl carrier protein (BCCP) subunit of acetyl-CoA carboxylase, or bind to the biotin operator site and inhibit transcription of the operon.</text>
</comment>
<comment type="catalytic activity">
    <reaction evidence="1">
        <text>biotin + L-lysyl-[protein] + ATP = N(6)-biotinyl-L-lysyl-[protein] + AMP + diphosphate + H(+)</text>
        <dbReference type="Rhea" id="RHEA:11756"/>
        <dbReference type="Rhea" id="RHEA-COMP:9752"/>
        <dbReference type="Rhea" id="RHEA-COMP:10505"/>
        <dbReference type="ChEBI" id="CHEBI:15378"/>
        <dbReference type="ChEBI" id="CHEBI:29969"/>
        <dbReference type="ChEBI" id="CHEBI:30616"/>
        <dbReference type="ChEBI" id="CHEBI:33019"/>
        <dbReference type="ChEBI" id="CHEBI:57586"/>
        <dbReference type="ChEBI" id="CHEBI:83144"/>
        <dbReference type="ChEBI" id="CHEBI:456215"/>
        <dbReference type="EC" id="6.3.4.15"/>
    </reaction>
</comment>
<comment type="similarity">
    <text evidence="1">Belongs to the biotin--protein ligase family.</text>
</comment>